<sequence length="344" mass="38138">MMENTLEPTLQNVINQTTLKWIFVGGKGGVGKTTCSCSLAIQLSQVRRSVLIISTDPAHNISDAFAQKFNKTPSAVNGFNNLYAMEIEANLGNDAQMVNPGVESSEGDIISLGRQVLQEMVGGLPGIDEAMSFSQMMKLIQSMDFDVVVFDTAPTGHTLRLLQFPTLIESSLGKLIGLQSSFAPLMTQMGGMLGLGEISADDTTNKLRETLDVVRRINSQFKDPDLTTFVCVCIAEFLSLYETERLIQELTKQNIDTHNIIVNQLLYPEEDENGCVKCKKCSARYGIQKKYLEQIADLYEDFNVTKLPLLESEVRGPGQLRNFSRYLIVPYDLNSSTVDNLTTH</sequence>
<proteinExistence type="inferred from homology"/>
<dbReference type="EC" id="3.6.-.-" evidence="1"/>
<dbReference type="EMBL" id="DS239414">
    <property type="protein sequence ID" value="EDP31120.1"/>
    <property type="molecule type" value="Genomic_DNA"/>
</dbReference>
<dbReference type="SMR" id="A8Q3T2"/>
<dbReference type="FunCoup" id="A8Q3T2">
    <property type="interactions" value="2061"/>
</dbReference>
<dbReference type="STRING" id="6279.A8Q3T2"/>
<dbReference type="EnsemblMetazoa" id="Bm13989a.1">
    <property type="protein sequence ID" value="Bm13989a.1"/>
    <property type="gene ID" value="WBGene00234250"/>
</dbReference>
<dbReference type="GeneID" id="6103313"/>
<dbReference type="KEGG" id="bmy:BM_BM13989"/>
<dbReference type="CTD" id="6103313"/>
<dbReference type="WormBase" id="Bm13989a">
    <property type="protein sequence ID" value="BM40696"/>
    <property type="gene ID" value="WBGene00234250"/>
    <property type="gene designation" value="Bma-asna-1"/>
</dbReference>
<dbReference type="InParanoid" id="A8Q3T2"/>
<dbReference type="OrthoDB" id="1770at2759"/>
<dbReference type="Proteomes" id="UP000006672">
    <property type="component" value="Unassembled WGS sequence"/>
</dbReference>
<dbReference type="GO" id="GO:0030424">
    <property type="term" value="C:axon"/>
    <property type="evidence" value="ECO:0007669"/>
    <property type="project" value="EnsemblMetazoa"/>
</dbReference>
<dbReference type="GO" id="GO:0043529">
    <property type="term" value="C:GET complex"/>
    <property type="evidence" value="ECO:0007669"/>
    <property type="project" value="TreeGrafter"/>
</dbReference>
<dbReference type="GO" id="GO:0043025">
    <property type="term" value="C:neuronal cell body"/>
    <property type="evidence" value="ECO:0007669"/>
    <property type="project" value="EnsemblMetazoa"/>
</dbReference>
<dbReference type="GO" id="GO:0005524">
    <property type="term" value="F:ATP binding"/>
    <property type="evidence" value="ECO:0007669"/>
    <property type="project" value="UniProtKB-UniRule"/>
</dbReference>
<dbReference type="GO" id="GO:0016887">
    <property type="term" value="F:ATP hydrolysis activity"/>
    <property type="evidence" value="ECO:0007669"/>
    <property type="project" value="EnsemblMetazoa"/>
</dbReference>
<dbReference type="GO" id="GO:0046872">
    <property type="term" value="F:metal ion binding"/>
    <property type="evidence" value="ECO:0007669"/>
    <property type="project" value="UniProtKB-KW"/>
</dbReference>
<dbReference type="GO" id="GO:0071722">
    <property type="term" value="P:detoxification of arsenic-containing substance"/>
    <property type="evidence" value="ECO:0007669"/>
    <property type="project" value="EnsemblMetazoa"/>
</dbReference>
<dbReference type="GO" id="GO:0032024">
    <property type="term" value="P:positive regulation of insulin secretion"/>
    <property type="evidence" value="ECO:0007669"/>
    <property type="project" value="EnsemblMetazoa"/>
</dbReference>
<dbReference type="GO" id="GO:0071816">
    <property type="term" value="P:tail-anchored membrane protein insertion into ER membrane"/>
    <property type="evidence" value="ECO:0007669"/>
    <property type="project" value="TreeGrafter"/>
</dbReference>
<dbReference type="CDD" id="cd02035">
    <property type="entry name" value="ArsA"/>
    <property type="match status" value="1"/>
</dbReference>
<dbReference type="FunFam" id="3.40.50.300:FF:000235">
    <property type="entry name" value="ATPase ASNA1"/>
    <property type="match status" value="1"/>
</dbReference>
<dbReference type="Gene3D" id="3.40.50.300">
    <property type="entry name" value="P-loop containing nucleotide triphosphate hydrolases"/>
    <property type="match status" value="1"/>
</dbReference>
<dbReference type="HAMAP" id="MF_03112">
    <property type="entry name" value="Asna1_Get3"/>
    <property type="match status" value="1"/>
</dbReference>
<dbReference type="InterPro" id="IPR025723">
    <property type="entry name" value="Anion-transp_ATPase-like_dom"/>
</dbReference>
<dbReference type="InterPro" id="IPR016300">
    <property type="entry name" value="ATPase_ArsA/GET3"/>
</dbReference>
<dbReference type="InterPro" id="IPR027542">
    <property type="entry name" value="ATPase_ArsA/GET3_euk"/>
</dbReference>
<dbReference type="InterPro" id="IPR027417">
    <property type="entry name" value="P-loop_NTPase"/>
</dbReference>
<dbReference type="NCBIfam" id="TIGR00345">
    <property type="entry name" value="GET3_arsA_TRC40"/>
    <property type="match status" value="1"/>
</dbReference>
<dbReference type="PANTHER" id="PTHR10803">
    <property type="entry name" value="ARSENICAL PUMP-DRIVING ATPASE ARSENITE-TRANSLOCATING ATPASE"/>
    <property type="match status" value="1"/>
</dbReference>
<dbReference type="PANTHER" id="PTHR10803:SF3">
    <property type="entry name" value="ATPASE GET3"/>
    <property type="match status" value="1"/>
</dbReference>
<dbReference type="Pfam" id="PF02374">
    <property type="entry name" value="ArsA_ATPase"/>
    <property type="match status" value="1"/>
</dbReference>
<dbReference type="SUPFAM" id="SSF52540">
    <property type="entry name" value="P-loop containing nucleoside triphosphate hydrolases"/>
    <property type="match status" value="1"/>
</dbReference>
<protein>
    <recommendedName>
        <fullName evidence="1">ATPase ASNA1 homolog</fullName>
        <ecNumber evidence="1">3.6.-.-</ecNumber>
    </recommendedName>
    <alternativeName>
        <fullName evidence="1">Arsenical pump-driving ATPase homolog</fullName>
    </alternativeName>
    <alternativeName>
        <fullName evidence="1">Arsenite-stimulated ATPase</fullName>
    </alternativeName>
</protein>
<name>ASNA_BRUMA</name>
<reference key="1">
    <citation type="journal article" date="2007" name="Science">
        <title>Draft genome of the filarial nematode parasite Brugia malayi.</title>
        <authorList>
            <person name="Ghedin E."/>
            <person name="Wang S."/>
            <person name="Spiro D."/>
            <person name="Caler E."/>
            <person name="Zhao Q."/>
            <person name="Crabtree J."/>
            <person name="Allen J.E."/>
            <person name="Delcher A.L."/>
            <person name="Guiliano D.B."/>
            <person name="Miranda-Saavedra D."/>
            <person name="Angiuoli S.V."/>
            <person name="Creasy T."/>
            <person name="Amedeo P."/>
            <person name="Haas B."/>
            <person name="El-Sayed N.M."/>
            <person name="Wortman J.R."/>
            <person name="Feldblyum T."/>
            <person name="Tallon L."/>
            <person name="Schatz M."/>
            <person name="Shumway M."/>
            <person name="Koo H."/>
            <person name="Salzberg S.L."/>
            <person name="Schobel S."/>
            <person name="Pertea M."/>
            <person name="Pop M."/>
            <person name="White O."/>
            <person name="Barton G.J."/>
            <person name="Carlow C.K.S."/>
            <person name="Crawford M.J."/>
            <person name="Daub J."/>
            <person name="Dimmic M.W."/>
            <person name="Estes C.F."/>
            <person name="Foster J.M."/>
            <person name="Ganatra M."/>
            <person name="Gregory W.F."/>
            <person name="Johnson N.M."/>
            <person name="Jin J."/>
            <person name="Komuniecki R."/>
            <person name="Korf I."/>
            <person name="Kumar S."/>
            <person name="Laney S."/>
            <person name="Li B.-W."/>
            <person name="Li W."/>
            <person name="Lindblom T.H."/>
            <person name="Lustigman S."/>
            <person name="Ma D."/>
            <person name="Maina C.V."/>
            <person name="Martin D.M."/>
            <person name="McCarter J.P."/>
            <person name="McReynolds L."/>
            <person name="Mitreva M."/>
            <person name="Nutman T.B."/>
            <person name="Parkinson J."/>
            <person name="Peregrin-Alvarez J.M."/>
            <person name="Poole C."/>
            <person name="Ren Q."/>
            <person name="Saunders L."/>
            <person name="Sluder A.E."/>
            <person name="Smith K."/>
            <person name="Stanke M."/>
            <person name="Unnasch T.R."/>
            <person name="Ware J."/>
            <person name="Wei A.D."/>
            <person name="Weil G."/>
            <person name="Williams D.J."/>
            <person name="Zhang Y."/>
            <person name="Williams S.A."/>
            <person name="Fraser-Liggett C."/>
            <person name="Slatko B."/>
            <person name="Blaxter M.L."/>
            <person name="Scott A.L."/>
        </authorList>
    </citation>
    <scope>NUCLEOTIDE SEQUENCE [LARGE SCALE GENOMIC DNA]</scope>
</reference>
<comment type="function">
    <text evidence="1">ATPase required for the post-translational delivery of tail-anchored (TA) proteins to the endoplasmic reticulum. Recognizes and selectively binds the transmembrane domain of TA proteins in the cytosol. This complex then targets to the endoplasmic reticulum by membrane-bound receptors, where the tail-anchored protein is released for insertion. This process is regulated by ATP binding and hydrolysis. ATP binding drives the homodimer towards the closed dimer state, facilitating recognition of newly synthesized TA membrane proteins. ATP hydrolysis is required for insertion. Subsequently, the homodimer reverts towards the open dimer state, lowering its affinity for the membrane-bound receptor, and returning it to the cytosol to initiate a new round of targeting.</text>
</comment>
<comment type="subunit">
    <text evidence="1">Homodimer.</text>
</comment>
<comment type="subcellular location">
    <subcellularLocation>
        <location evidence="1">Cytoplasm</location>
    </subcellularLocation>
    <subcellularLocation>
        <location evidence="1">Endoplasmic reticulum</location>
    </subcellularLocation>
</comment>
<comment type="similarity">
    <text evidence="1">Belongs to the arsA ATPase family.</text>
</comment>
<accession>A8Q3T2</accession>
<feature type="chain" id="PRO_0000388161" description="ATPase ASNA1 homolog">
    <location>
        <begin position="1"/>
        <end position="344"/>
    </location>
</feature>
<feature type="active site" evidence="1">
    <location>
        <position position="56"/>
    </location>
</feature>
<feature type="binding site" evidence="1">
    <location>
        <begin position="27"/>
        <end position="34"/>
    </location>
    <ligand>
        <name>ATP</name>
        <dbReference type="ChEBI" id="CHEBI:30616"/>
    </ligand>
</feature>
<feature type="binding site" evidence="1">
    <location>
        <position position="236"/>
    </location>
    <ligand>
        <name>ATP</name>
        <dbReference type="ChEBI" id="CHEBI:30616"/>
    </ligand>
</feature>
<feature type="binding site" evidence="1">
    <location>
        <position position="263"/>
    </location>
    <ligand>
        <name>ATP</name>
        <dbReference type="ChEBI" id="CHEBI:30616"/>
    </ligand>
</feature>
<feature type="binding site" evidence="1">
    <location>
        <position position="278"/>
    </location>
    <ligand>
        <name>Zn(2+)</name>
        <dbReference type="ChEBI" id="CHEBI:29105"/>
        <note>ligand shared between dimeric partners</note>
    </ligand>
</feature>
<feature type="binding site" evidence="1">
    <location>
        <position position="281"/>
    </location>
    <ligand>
        <name>Zn(2+)</name>
        <dbReference type="ChEBI" id="CHEBI:29105"/>
        <note>ligand shared between dimeric partners</note>
    </ligand>
</feature>
<keyword id="KW-0067">ATP-binding</keyword>
<keyword id="KW-0963">Cytoplasm</keyword>
<keyword id="KW-0256">Endoplasmic reticulum</keyword>
<keyword id="KW-0378">Hydrolase</keyword>
<keyword id="KW-0479">Metal-binding</keyword>
<keyword id="KW-0547">Nucleotide-binding</keyword>
<keyword id="KW-1185">Reference proteome</keyword>
<keyword id="KW-0813">Transport</keyword>
<keyword id="KW-0862">Zinc</keyword>
<gene>
    <name type="ORF">Bm1_42140</name>
</gene>
<organism>
    <name type="scientific">Brugia malayi</name>
    <name type="common">Filarial nematode worm</name>
    <dbReference type="NCBI Taxonomy" id="6279"/>
    <lineage>
        <taxon>Eukaryota</taxon>
        <taxon>Metazoa</taxon>
        <taxon>Ecdysozoa</taxon>
        <taxon>Nematoda</taxon>
        <taxon>Chromadorea</taxon>
        <taxon>Rhabditida</taxon>
        <taxon>Spirurina</taxon>
        <taxon>Spiruromorpha</taxon>
        <taxon>Filarioidea</taxon>
        <taxon>Onchocercidae</taxon>
        <taxon>Brugia</taxon>
    </lineage>
</organism>
<evidence type="ECO:0000255" key="1">
    <source>
        <dbReference type="HAMAP-Rule" id="MF_03112"/>
    </source>
</evidence>